<gene>
    <name type="primary">MIC27</name>
    <name type="ORF">SCY_4691</name>
</gene>
<dbReference type="EMBL" id="AAFW02000067">
    <property type="protein sequence ID" value="EDN62712.1"/>
    <property type="molecule type" value="Genomic_DNA"/>
</dbReference>
<dbReference type="SMR" id="A6ZRY0"/>
<dbReference type="HOGENOM" id="CLU_093584_0_0_1"/>
<dbReference type="Proteomes" id="UP000007060">
    <property type="component" value="Unassembled WGS sequence"/>
</dbReference>
<dbReference type="GO" id="GO:0005743">
    <property type="term" value="C:mitochondrial inner membrane"/>
    <property type="evidence" value="ECO:0007669"/>
    <property type="project" value="UniProtKB-SubCell"/>
</dbReference>
<feature type="chain" id="PRO_0000399840" description="MICOS complex subunit MIC27">
    <location>
        <begin position="1"/>
        <end position="234"/>
    </location>
</feature>
<feature type="topological domain" description="Mitochondrial intermembrane" evidence="2">
    <location>
        <begin position="1"/>
        <end position="100"/>
    </location>
</feature>
<feature type="transmembrane region" description="Helical" evidence="2">
    <location>
        <begin position="101"/>
        <end position="120"/>
    </location>
</feature>
<feature type="topological domain" description="Mitochondrial matrix" evidence="2">
    <location>
        <begin position="121"/>
        <end position="141"/>
    </location>
</feature>
<feature type="transmembrane region" description="Helical" evidence="2">
    <location>
        <begin position="142"/>
        <end position="161"/>
    </location>
</feature>
<feature type="topological domain" description="Mitochondrial intermembrane" evidence="2">
    <location>
        <begin position="162"/>
        <end position="234"/>
    </location>
</feature>
<evidence type="ECO:0000250" key="1"/>
<evidence type="ECO:0000255" key="2"/>
<evidence type="ECO:0000305" key="3"/>
<organism>
    <name type="scientific">Saccharomyces cerevisiae (strain YJM789)</name>
    <name type="common">Baker's yeast</name>
    <dbReference type="NCBI Taxonomy" id="307796"/>
    <lineage>
        <taxon>Eukaryota</taxon>
        <taxon>Fungi</taxon>
        <taxon>Dikarya</taxon>
        <taxon>Ascomycota</taxon>
        <taxon>Saccharomycotina</taxon>
        <taxon>Saccharomycetes</taxon>
        <taxon>Saccharomycetales</taxon>
        <taxon>Saccharomycetaceae</taxon>
        <taxon>Saccharomyces</taxon>
    </lineage>
</organism>
<proteinExistence type="inferred from homology"/>
<protein>
    <recommendedName>
        <fullName>MICOS complex subunit MIC27</fullName>
    </recommendedName>
</protein>
<sequence>MVNFYDDVDESKSHGEFPLIPVVLQNSSELSVRTIPTGNEIIESVHLTKWLRKYRNALASQLDRYEKGWQSKIANFRLQVQHVINYSRKNIFNVDSENKHTVVPGSLIALGAFFAGSIAVNRSNWGAKRLIFGHKSSILEKLCTSLPSRILLPWVLAAATFKYWAPQTSQNLVNATENDLLPADFVKSYHNTWKRIYEEGYVAKKCDLKRQIDQTLQKNIRYAREQLYEKLEQA</sequence>
<accession>A6ZRY0</accession>
<keyword id="KW-0472">Membrane</keyword>
<keyword id="KW-0496">Mitochondrion</keyword>
<keyword id="KW-0999">Mitochondrion inner membrane</keyword>
<keyword id="KW-0812">Transmembrane</keyword>
<keyword id="KW-1133">Transmembrane helix</keyword>
<reference key="1">
    <citation type="journal article" date="2007" name="Proc. Natl. Acad. Sci. U.S.A.">
        <title>Genome sequencing and comparative analysis of Saccharomyces cerevisiae strain YJM789.</title>
        <authorList>
            <person name="Wei W."/>
            <person name="McCusker J.H."/>
            <person name="Hyman R.W."/>
            <person name="Jones T."/>
            <person name="Ning Y."/>
            <person name="Cao Z."/>
            <person name="Gu Z."/>
            <person name="Bruno D."/>
            <person name="Miranda M."/>
            <person name="Nguyen M."/>
            <person name="Wilhelmy J."/>
            <person name="Komp C."/>
            <person name="Tamse R."/>
            <person name="Wang X."/>
            <person name="Jia P."/>
            <person name="Luedi P."/>
            <person name="Oefner P.J."/>
            <person name="David L."/>
            <person name="Dietrich F.S."/>
            <person name="Li Y."/>
            <person name="Davis R.W."/>
            <person name="Steinmetz L.M."/>
        </authorList>
    </citation>
    <scope>NUCLEOTIDE SEQUENCE [LARGE SCALE GENOMIC DNA]</scope>
    <source>
        <strain>YJM789</strain>
    </source>
</reference>
<name>MIC27_YEAS7</name>
<comment type="function">
    <text evidence="1">Component of the MICOS complex, a large protein complex of the mitochondrial inner membrane that plays crucial roles in the maintenance of crista junctions, inner membrane architecture, and formation of contact sites to the outer membrane.</text>
</comment>
<comment type="subunit">
    <text evidence="1">Component of the mitochondrial contact site and cristae organizing system (MICOS) complex.</text>
</comment>
<comment type="subcellular location">
    <subcellularLocation>
        <location evidence="1">Mitochondrion inner membrane</location>
        <topology evidence="3">Multi-pass membrane protein</topology>
    </subcellularLocation>
</comment>
<comment type="similarity">
    <text evidence="3">Belongs to the apolipoprotein O/MICOS complex subunit Mic27 family.</text>
</comment>